<evidence type="ECO:0000255" key="1">
    <source>
        <dbReference type="HAMAP-Rule" id="MF_00076"/>
    </source>
</evidence>
<reference key="1">
    <citation type="journal article" date="2006" name="Proc. Natl. Acad. Sci. U.S.A.">
        <title>Burkholderia xenovorans LB400 harbors a multi-replicon, 9.73-Mbp genome shaped for versatility.</title>
        <authorList>
            <person name="Chain P.S.G."/>
            <person name="Denef V.J."/>
            <person name="Konstantinidis K.T."/>
            <person name="Vergez L.M."/>
            <person name="Agullo L."/>
            <person name="Reyes V.L."/>
            <person name="Hauser L."/>
            <person name="Cordova M."/>
            <person name="Gomez L."/>
            <person name="Gonzalez M."/>
            <person name="Land M."/>
            <person name="Lao V."/>
            <person name="Larimer F."/>
            <person name="LiPuma J.J."/>
            <person name="Mahenthiralingam E."/>
            <person name="Malfatti S.A."/>
            <person name="Marx C.J."/>
            <person name="Parnell J.J."/>
            <person name="Ramette A."/>
            <person name="Richardson P."/>
            <person name="Seeger M."/>
            <person name="Smith D."/>
            <person name="Spilker T."/>
            <person name="Sul W.J."/>
            <person name="Tsoi T.V."/>
            <person name="Ulrich L.E."/>
            <person name="Zhulin I.B."/>
            <person name="Tiedje J.M."/>
        </authorList>
    </citation>
    <scope>NUCLEOTIDE SEQUENCE [LARGE SCALE GENOMIC DNA]</scope>
    <source>
        <strain>LB400</strain>
    </source>
</reference>
<feature type="chain" id="PRO_1000010264" description="Imidazoleglycerol-phosphate dehydratase">
    <location>
        <begin position="1"/>
        <end position="195"/>
    </location>
</feature>
<accession>Q13TQ6</accession>
<comment type="catalytic activity">
    <reaction evidence="1">
        <text>D-erythro-1-(imidazol-4-yl)glycerol 3-phosphate = 3-(imidazol-4-yl)-2-oxopropyl phosphate + H2O</text>
        <dbReference type="Rhea" id="RHEA:11040"/>
        <dbReference type="ChEBI" id="CHEBI:15377"/>
        <dbReference type="ChEBI" id="CHEBI:57766"/>
        <dbReference type="ChEBI" id="CHEBI:58278"/>
        <dbReference type="EC" id="4.2.1.19"/>
    </reaction>
</comment>
<comment type="pathway">
    <text evidence="1">Amino-acid biosynthesis; L-histidine biosynthesis; L-histidine from 5-phospho-alpha-D-ribose 1-diphosphate: step 6/9.</text>
</comment>
<comment type="subcellular location">
    <subcellularLocation>
        <location evidence="1">Cytoplasm</location>
    </subcellularLocation>
</comment>
<comment type="similarity">
    <text evidence="1">Belongs to the imidazoleglycerol-phosphate dehydratase family.</text>
</comment>
<protein>
    <recommendedName>
        <fullName evidence="1">Imidazoleglycerol-phosphate dehydratase</fullName>
        <shortName evidence="1">IGPD</shortName>
        <ecNumber evidence="1">4.2.1.19</ecNumber>
    </recommendedName>
</protein>
<name>HIS7_PARXL</name>
<organism>
    <name type="scientific">Paraburkholderia xenovorans (strain LB400)</name>
    <dbReference type="NCBI Taxonomy" id="266265"/>
    <lineage>
        <taxon>Bacteria</taxon>
        <taxon>Pseudomonadati</taxon>
        <taxon>Pseudomonadota</taxon>
        <taxon>Betaproteobacteria</taxon>
        <taxon>Burkholderiales</taxon>
        <taxon>Burkholderiaceae</taxon>
        <taxon>Paraburkholderia</taxon>
    </lineage>
</organism>
<dbReference type="EC" id="4.2.1.19" evidence="1"/>
<dbReference type="EMBL" id="CP000270">
    <property type="protein sequence ID" value="ABE32533.1"/>
    <property type="molecule type" value="Genomic_DNA"/>
</dbReference>
<dbReference type="RefSeq" id="WP_007180208.1">
    <property type="nucleotide sequence ID" value="NZ_CP008760.1"/>
</dbReference>
<dbReference type="SMR" id="Q13TQ6"/>
<dbReference type="STRING" id="266265.Bxe_A0400"/>
<dbReference type="KEGG" id="bxb:DR64_2570"/>
<dbReference type="KEGG" id="bxe:Bxe_A0400"/>
<dbReference type="eggNOG" id="COG0131">
    <property type="taxonomic scope" value="Bacteria"/>
</dbReference>
<dbReference type="OrthoDB" id="9790411at2"/>
<dbReference type="UniPathway" id="UPA00031">
    <property type="reaction ID" value="UER00011"/>
</dbReference>
<dbReference type="Proteomes" id="UP000001817">
    <property type="component" value="Chromosome 1"/>
</dbReference>
<dbReference type="GO" id="GO:0005737">
    <property type="term" value="C:cytoplasm"/>
    <property type="evidence" value="ECO:0007669"/>
    <property type="project" value="UniProtKB-SubCell"/>
</dbReference>
<dbReference type="GO" id="GO:0004424">
    <property type="term" value="F:imidazoleglycerol-phosphate dehydratase activity"/>
    <property type="evidence" value="ECO:0007669"/>
    <property type="project" value="UniProtKB-UniRule"/>
</dbReference>
<dbReference type="GO" id="GO:0000105">
    <property type="term" value="P:L-histidine biosynthetic process"/>
    <property type="evidence" value="ECO:0007669"/>
    <property type="project" value="UniProtKB-UniRule"/>
</dbReference>
<dbReference type="CDD" id="cd07914">
    <property type="entry name" value="IGPD"/>
    <property type="match status" value="1"/>
</dbReference>
<dbReference type="FunFam" id="3.30.230.40:FF:000002">
    <property type="entry name" value="Imidazoleglycerol-phosphate dehydratase"/>
    <property type="match status" value="1"/>
</dbReference>
<dbReference type="FunFam" id="3.30.230.40:FF:000003">
    <property type="entry name" value="Imidazoleglycerol-phosphate dehydratase HisB"/>
    <property type="match status" value="1"/>
</dbReference>
<dbReference type="Gene3D" id="3.30.230.40">
    <property type="entry name" value="Imidazole glycerol phosphate dehydratase, domain 1"/>
    <property type="match status" value="2"/>
</dbReference>
<dbReference type="HAMAP" id="MF_00076">
    <property type="entry name" value="HisB"/>
    <property type="match status" value="1"/>
</dbReference>
<dbReference type="InterPro" id="IPR038494">
    <property type="entry name" value="IGPD_sf"/>
</dbReference>
<dbReference type="InterPro" id="IPR000807">
    <property type="entry name" value="ImidazoleglycerolP_deHydtase"/>
</dbReference>
<dbReference type="InterPro" id="IPR020565">
    <property type="entry name" value="ImidazoleglycerP_deHydtase_CS"/>
</dbReference>
<dbReference type="InterPro" id="IPR020568">
    <property type="entry name" value="Ribosomal_Su5_D2-typ_SF"/>
</dbReference>
<dbReference type="NCBIfam" id="NF002106">
    <property type="entry name" value="PRK00951.1-1"/>
    <property type="match status" value="1"/>
</dbReference>
<dbReference type="NCBIfam" id="NF002109">
    <property type="entry name" value="PRK00951.1-5"/>
    <property type="match status" value="1"/>
</dbReference>
<dbReference type="NCBIfam" id="NF002111">
    <property type="entry name" value="PRK00951.2-1"/>
    <property type="match status" value="1"/>
</dbReference>
<dbReference type="NCBIfam" id="NF002114">
    <property type="entry name" value="PRK00951.2-4"/>
    <property type="match status" value="1"/>
</dbReference>
<dbReference type="PANTHER" id="PTHR23133:SF2">
    <property type="entry name" value="IMIDAZOLEGLYCEROL-PHOSPHATE DEHYDRATASE"/>
    <property type="match status" value="1"/>
</dbReference>
<dbReference type="PANTHER" id="PTHR23133">
    <property type="entry name" value="IMIDAZOLEGLYCEROL-PHOSPHATE DEHYDRATASE HIS7"/>
    <property type="match status" value="1"/>
</dbReference>
<dbReference type="Pfam" id="PF00475">
    <property type="entry name" value="IGPD"/>
    <property type="match status" value="1"/>
</dbReference>
<dbReference type="SUPFAM" id="SSF54211">
    <property type="entry name" value="Ribosomal protein S5 domain 2-like"/>
    <property type="match status" value="2"/>
</dbReference>
<dbReference type="PROSITE" id="PS00954">
    <property type="entry name" value="IGP_DEHYDRATASE_1"/>
    <property type="match status" value="1"/>
</dbReference>
<dbReference type="PROSITE" id="PS00955">
    <property type="entry name" value="IGP_DEHYDRATASE_2"/>
    <property type="match status" value="1"/>
</dbReference>
<gene>
    <name evidence="1" type="primary">hisB</name>
    <name type="ordered locus">Bxeno_A3995</name>
    <name type="ORF">Bxe_A0400</name>
</gene>
<keyword id="KW-0028">Amino-acid biosynthesis</keyword>
<keyword id="KW-0963">Cytoplasm</keyword>
<keyword id="KW-0368">Histidine biosynthesis</keyword>
<keyword id="KW-0456">Lyase</keyword>
<keyword id="KW-1185">Reference proteome</keyword>
<proteinExistence type="inferred from homology"/>
<sequence length="195" mass="21628">MRLAEVVRNTSETQIRVKINLDGTGQQKLATGVPFLDHMLDQIARHGLFDLEIEAHGDLHIDDHHTVEDTGITLGQAVAKAIGDKKGIRRYGHSYVPLDEALSRVVIDFSGRPGLEFHVPFTRARIGTFDVDLSIEFFRGFVNHAGVTLHIDNLRGLNAHHQMETVFKAFGRALRMATELDERAAGQIPSTKGSL</sequence>